<keyword id="KW-0169">Cobalamin biosynthesis</keyword>
<keyword id="KW-0315">Glutamine amidotransferase</keyword>
<gene>
    <name evidence="1" type="primary">cobQ</name>
    <name type="ordered locus">Mkms_2097</name>
</gene>
<protein>
    <recommendedName>
        <fullName evidence="1">Cobyric acid synthase</fullName>
    </recommendedName>
</protein>
<dbReference type="EMBL" id="CP000518">
    <property type="protein sequence ID" value="ABL91295.1"/>
    <property type="molecule type" value="Genomic_DNA"/>
</dbReference>
<dbReference type="SMR" id="A1UEN7"/>
<dbReference type="STRING" id="189918.Mkms_2097"/>
<dbReference type="KEGG" id="mkm:Mkms_2097"/>
<dbReference type="HOGENOM" id="CLU_019250_2_2_11"/>
<dbReference type="OrthoDB" id="9808302at2"/>
<dbReference type="UniPathway" id="UPA00148"/>
<dbReference type="GO" id="GO:0015420">
    <property type="term" value="F:ABC-type vitamin B12 transporter activity"/>
    <property type="evidence" value="ECO:0007669"/>
    <property type="project" value="UniProtKB-UniRule"/>
</dbReference>
<dbReference type="GO" id="GO:0003824">
    <property type="term" value="F:catalytic activity"/>
    <property type="evidence" value="ECO:0007669"/>
    <property type="project" value="InterPro"/>
</dbReference>
<dbReference type="GO" id="GO:0009236">
    <property type="term" value="P:cobalamin biosynthetic process"/>
    <property type="evidence" value="ECO:0007669"/>
    <property type="project" value="UniProtKB-UniRule"/>
</dbReference>
<dbReference type="CDD" id="cd05389">
    <property type="entry name" value="CobQ_N"/>
    <property type="match status" value="1"/>
</dbReference>
<dbReference type="CDD" id="cd01750">
    <property type="entry name" value="GATase1_CobQ"/>
    <property type="match status" value="1"/>
</dbReference>
<dbReference type="Gene3D" id="3.40.50.880">
    <property type="match status" value="1"/>
</dbReference>
<dbReference type="Gene3D" id="3.40.50.300">
    <property type="entry name" value="P-loop containing nucleotide triphosphate hydrolases"/>
    <property type="match status" value="1"/>
</dbReference>
<dbReference type="HAMAP" id="MF_00028">
    <property type="entry name" value="CobQ"/>
    <property type="match status" value="1"/>
</dbReference>
<dbReference type="InterPro" id="IPR029062">
    <property type="entry name" value="Class_I_gatase-like"/>
</dbReference>
<dbReference type="InterPro" id="IPR002586">
    <property type="entry name" value="CobQ/CobB/MinD/ParA_Nub-bd_dom"/>
</dbReference>
<dbReference type="InterPro" id="IPR033949">
    <property type="entry name" value="CobQ_GATase1"/>
</dbReference>
<dbReference type="InterPro" id="IPR047045">
    <property type="entry name" value="CobQ_N"/>
</dbReference>
<dbReference type="InterPro" id="IPR004459">
    <property type="entry name" value="CobQ_synth"/>
</dbReference>
<dbReference type="InterPro" id="IPR011698">
    <property type="entry name" value="GATase_3"/>
</dbReference>
<dbReference type="InterPro" id="IPR027417">
    <property type="entry name" value="P-loop_NTPase"/>
</dbReference>
<dbReference type="NCBIfam" id="TIGR00313">
    <property type="entry name" value="cobQ"/>
    <property type="match status" value="1"/>
</dbReference>
<dbReference type="NCBIfam" id="NF001989">
    <property type="entry name" value="PRK00784.1"/>
    <property type="match status" value="1"/>
</dbReference>
<dbReference type="PANTHER" id="PTHR21343:SF1">
    <property type="entry name" value="COBYRIC ACID SYNTHASE"/>
    <property type="match status" value="1"/>
</dbReference>
<dbReference type="PANTHER" id="PTHR21343">
    <property type="entry name" value="DETHIOBIOTIN SYNTHETASE"/>
    <property type="match status" value="1"/>
</dbReference>
<dbReference type="Pfam" id="PF01656">
    <property type="entry name" value="CbiA"/>
    <property type="match status" value="1"/>
</dbReference>
<dbReference type="Pfam" id="PF07685">
    <property type="entry name" value="GATase_3"/>
    <property type="match status" value="1"/>
</dbReference>
<dbReference type="SUPFAM" id="SSF52317">
    <property type="entry name" value="Class I glutamine amidotransferase-like"/>
    <property type="match status" value="1"/>
</dbReference>
<dbReference type="SUPFAM" id="SSF52540">
    <property type="entry name" value="P-loop containing nucleoside triphosphate hydrolases"/>
    <property type="match status" value="1"/>
</dbReference>
<dbReference type="PROSITE" id="PS51274">
    <property type="entry name" value="GATASE_COBBQ"/>
    <property type="match status" value="1"/>
</dbReference>
<evidence type="ECO:0000255" key="1">
    <source>
        <dbReference type="HAMAP-Rule" id="MF_00028"/>
    </source>
</evidence>
<proteinExistence type="inferred from homology"/>
<organism>
    <name type="scientific">Mycobacterium sp. (strain KMS)</name>
    <dbReference type="NCBI Taxonomy" id="189918"/>
    <lineage>
        <taxon>Bacteria</taxon>
        <taxon>Bacillati</taxon>
        <taxon>Actinomycetota</taxon>
        <taxon>Actinomycetes</taxon>
        <taxon>Mycobacteriales</taxon>
        <taxon>Mycobacteriaceae</taxon>
        <taxon>Mycobacterium</taxon>
    </lineage>
</organism>
<comment type="function">
    <text evidence="1">Catalyzes amidations at positions B, D, E, and G on adenosylcobyrinic A,C-diamide. NH(2) groups are provided by glutamine, and one molecule of ATP is hydrogenolyzed for each amidation.</text>
</comment>
<comment type="pathway">
    <text evidence="1">Cofactor biosynthesis; adenosylcobalamin biosynthesis.</text>
</comment>
<comment type="similarity">
    <text evidence="1">Belongs to the CobB/CobQ family. CobQ subfamily.</text>
</comment>
<feature type="chain" id="PRO_0000332352" description="Cobyric acid synthase">
    <location>
        <begin position="1"/>
        <end position="495"/>
    </location>
</feature>
<feature type="domain" description="GATase cobBQ-type" evidence="1">
    <location>
        <begin position="258"/>
        <end position="427"/>
    </location>
</feature>
<feature type="active site" description="Nucleophile" evidence="1">
    <location>
        <position position="339"/>
    </location>
</feature>
<feature type="active site" evidence="1">
    <location>
        <position position="419"/>
    </location>
</feature>
<sequence length="495" mass="52111">MTGGALLVAGTTSDAGKSMVVAGLCRLLARKGVRVAPFKAQNMSNNSAVTVDGGEIGRAQAMQARAAGLDPSVRFNPVLLKPGSDRTSQLVVRGRVTGTVSATDYITHRDRLADVVADELASLRAEFDVVLCEGAGSPAEINLRRTDLANMGLARRAHLPVIVVGDIDRGGVLAHLFGTVAVLHPDDQALIAGFVVNKFRGDPTLLAPGLDQLHDLTGRPTYGVIPYSDELWMDTEDSVSVVAGRTIGRPTPPRGADGLRVAAVRLPRISNSTDIEALACEPGVTVRWVTDPADVADADVVVLPGTKATVADLQWLRTAGLAEPIAAHAGAGRPLLGICGGFQMLCRHIDDAVESRAGRVDGLGLLDADIAFAAEKTLRHRTTPLQGYEIHHGQVTRCAADDWAGIGVRRDAVYGTHWHGLFDNDGFRRAWLADAAAAAGRSGFVVADDIDVSARRDAQLDVMADLLQNHLDLDAALGLVDAGPPPRPTISTGIT</sequence>
<accession>A1UEN7</accession>
<reference key="1">
    <citation type="submission" date="2006-12" db="EMBL/GenBank/DDBJ databases">
        <title>Complete sequence of chromosome of Mycobacterium sp. KMS.</title>
        <authorList>
            <consortium name="US DOE Joint Genome Institute"/>
            <person name="Copeland A."/>
            <person name="Lucas S."/>
            <person name="Lapidus A."/>
            <person name="Barry K."/>
            <person name="Detter J.C."/>
            <person name="Glavina del Rio T."/>
            <person name="Hammon N."/>
            <person name="Israni S."/>
            <person name="Dalin E."/>
            <person name="Tice H."/>
            <person name="Pitluck S."/>
            <person name="Kiss H."/>
            <person name="Brettin T."/>
            <person name="Bruce D."/>
            <person name="Han C."/>
            <person name="Tapia R."/>
            <person name="Gilna P."/>
            <person name="Schmutz J."/>
            <person name="Larimer F."/>
            <person name="Land M."/>
            <person name="Hauser L."/>
            <person name="Kyrpides N."/>
            <person name="Mikhailova N."/>
            <person name="Miller C.D."/>
            <person name="Richardson P."/>
        </authorList>
    </citation>
    <scope>NUCLEOTIDE SEQUENCE [LARGE SCALE GENOMIC DNA]</scope>
    <source>
        <strain>KMS</strain>
    </source>
</reference>
<name>COBQ_MYCSK</name>